<accession>P9WMG7</accession>
<accession>L0T5J2</accession>
<accession>P67739</accession>
<accession>Q11159</accession>
<reference key="1">
    <citation type="journal article" date="1998" name="Nature">
        <title>Deciphering the biology of Mycobacterium tuberculosis from the complete genome sequence.</title>
        <authorList>
            <person name="Cole S.T."/>
            <person name="Brosch R."/>
            <person name="Parkhill J."/>
            <person name="Garnier T."/>
            <person name="Churcher C.M."/>
            <person name="Harris D.E."/>
            <person name="Gordon S.V."/>
            <person name="Eiglmeier K."/>
            <person name="Gas S."/>
            <person name="Barry C.E. III"/>
            <person name="Tekaia F."/>
            <person name="Badcock K."/>
            <person name="Basham D."/>
            <person name="Brown D."/>
            <person name="Chillingworth T."/>
            <person name="Connor R."/>
            <person name="Davies R.M."/>
            <person name="Devlin K."/>
            <person name="Feltwell T."/>
            <person name="Gentles S."/>
            <person name="Hamlin N."/>
            <person name="Holroyd S."/>
            <person name="Hornsby T."/>
            <person name="Jagels K."/>
            <person name="Krogh A."/>
            <person name="McLean J."/>
            <person name="Moule S."/>
            <person name="Murphy L.D."/>
            <person name="Oliver S."/>
            <person name="Osborne J."/>
            <person name="Quail M.A."/>
            <person name="Rajandream M.A."/>
            <person name="Rogers J."/>
            <person name="Rutter S."/>
            <person name="Seeger K."/>
            <person name="Skelton S."/>
            <person name="Squares S."/>
            <person name="Squares R."/>
            <person name="Sulston J.E."/>
            <person name="Taylor K."/>
            <person name="Whitehead S."/>
            <person name="Barrell B.G."/>
        </authorList>
    </citation>
    <scope>NUCLEOTIDE SEQUENCE [LARGE SCALE GENOMIC DNA]</scope>
    <source>
        <strain>ATCC 25618 / H37Rv</strain>
    </source>
</reference>
<reference key="2">
    <citation type="journal article" date="2011" name="Mol. Cell. Proteomics">
        <title>Proteogenomic analysis of Mycobacterium tuberculosis by high resolution mass spectrometry.</title>
        <authorList>
            <person name="Kelkar D.S."/>
            <person name="Kumar D."/>
            <person name="Kumar P."/>
            <person name="Balakrishnan L."/>
            <person name="Muthusamy B."/>
            <person name="Yadav A.K."/>
            <person name="Shrivastava P."/>
            <person name="Marimuthu A."/>
            <person name="Anand S."/>
            <person name="Sundaram H."/>
            <person name="Kingsbury R."/>
            <person name="Harsha H.C."/>
            <person name="Nair B."/>
            <person name="Prasad T.S."/>
            <person name="Chauhan D.S."/>
            <person name="Katoch K."/>
            <person name="Katoch V.M."/>
            <person name="Kumar P."/>
            <person name="Chaerkady R."/>
            <person name="Ramachandran S."/>
            <person name="Dash D."/>
            <person name="Pandey A."/>
        </authorList>
    </citation>
    <scope>IDENTIFICATION BY MASS SPECTROMETRY [LARGE SCALE ANALYSIS]</scope>
    <source>
        <strain>ATCC 25618 / H37Rv</strain>
    </source>
</reference>
<gene>
    <name type="ordered locus">Rv0494</name>
    <name type="ORF">MTCY20G9.20</name>
</gene>
<feature type="chain" id="PRO_0000050697" description="Uncharacterized HTH-type transcriptional regulator Rv0494">
    <location>
        <begin position="1"/>
        <end position="242"/>
    </location>
</feature>
<feature type="domain" description="HTH gntR-type" evidence="1">
    <location>
        <begin position="17"/>
        <end position="85"/>
    </location>
</feature>
<feature type="DNA-binding region" description="H-T-H motif" evidence="1">
    <location>
        <begin position="45"/>
        <end position="64"/>
    </location>
</feature>
<keyword id="KW-0238">DNA-binding</keyword>
<keyword id="KW-1185">Reference proteome</keyword>
<keyword id="KW-0804">Transcription</keyword>
<keyword id="KW-0805">Transcription regulation</keyword>
<evidence type="ECO:0000255" key="1">
    <source>
        <dbReference type="PROSITE-ProRule" id="PRU00307"/>
    </source>
</evidence>
<name>Y494_MYCTU</name>
<proteinExistence type="evidence at protein level"/>
<sequence length="242" mass="26015">MVEPMNQSSVFQPPDRQRVDERIATTIADAILDGVFPPGSTLPPERDLAERLGVNRTSLRQGLARLQQMGLIEVRHGSGSVVRDPEGLTHPAVVEALVRKLGPDFLVELLEIRAALGPLIGRLAAARSTPEDAEALCAALEVVQQADTAAARQAADLAYFRVLIHSTRNRALGLLYRWVEHAFGGREHALTGAYDDADPVLTDLRAINGAVLAGDPAAAAATVEAYLNASALRMVKSYRDRA</sequence>
<organism>
    <name type="scientific">Mycobacterium tuberculosis (strain ATCC 25618 / H37Rv)</name>
    <dbReference type="NCBI Taxonomy" id="83332"/>
    <lineage>
        <taxon>Bacteria</taxon>
        <taxon>Bacillati</taxon>
        <taxon>Actinomycetota</taxon>
        <taxon>Actinomycetes</taxon>
        <taxon>Mycobacteriales</taxon>
        <taxon>Mycobacteriaceae</taxon>
        <taxon>Mycobacterium</taxon>
        <taxon>Mycobacterium tuberculosis complex</taxon>
    </lineage>
</organism>
<dbReference type="EMBL" id="AL123456">
    <property type="protein sequence ID" value="CCP43229.1"/>
    <property type="molecule type" value="Genomic_DNA"/>
</dbReference>
<dbReference type="PIR" id="A70745">
    <property type="entry name" value="A70745"/>
</dbReference>
<dbReference type="RefSeq" id="NP_215008.2">
    <property type="nucleotide sequence ID" value="NC_000962.3"/>
</dbReference>
<dbReference type="RefSeq" id="WP_003402414.1">
    <property type="nucleotide sequence ID" value="NC_000962.3"/>
</dbReference>
<dbReference type="SMR" id="P9WMG7"/>
<dbReference type="FunCoup" id="P9WMG7">
    <property type="interactions" value="13"/>
</dbReference>
<dbReference type="STRING" id="83332.Rv0494"/>
<dbReference type="PaxDb" id="83332-Rv0494"/>
<dbReference type="DNASU" id="887166"/>
<dbReference type="GeneID" id="887166"/>
<dbReference type="KEGG" id="mtu:Rv0494"/>
<dbReference type="KEGG" id="mtv:RVBD_0494"/>
<dbReference type="PATRIC" id="fig|83332.111.peg.543"/>
<dbReference type="TubercuList" id="Rv0494"/>
<dbReference type="eggNOG" id="COG2186">
    <property type="taxonomic scope" value="Bacteria"/>
</dbReference>
<dbReference type="InParanoid" id="P9WMG7"/>
<dbReference type="OrthoDB" id="9784718at2"/>
<dbReference type="PhylomeDB" id="P9WMG7"/>
<dbReference type="Proteomes" id="UP000001584">
    <property type="component" value="Chromosome"/>
</dbReference>
<dbReference type="GO" id="GO:0003677">
    <property type="term" value="F:DNA binding"/>
    <property type="evidence" value="ECO:0007669"/>
    <property type="project" value="UniProtKB-KW"/>
</dbReference>
<dbReference type="GO" id="GO:0003700">
    <property type="term" value="F:DNA-binding transcription factor activity"/>
    <property type="evidence" value="ECO:0007669"/>
    <property type="project" value="InterPro"/>
</dbReference>
<dbReference type="CDD" id="cd07377">
    <property type="entry name" value="WHTH_GntR"/>
    <property type="match status" value="1"/>
</dbReference>
<dbReference type="Gene3D" id="1.20.120.530">
    <property type="entry name" value="GntR ligand-binding domain-like"/>
    <property type="match status" value="1"/>
</dbReference>
<dbReference type="Gene3D" id="1.10.10.10">
    <property type="entry name" value="Winged helix-like DNA-binding domain superfamily/Winged helix DNA-binding domain"/>
    <property type="match status" value="1"/>
</dbReference>
<dbReference type="InterPro" id="IPR011711">
    <property type="entry name" value="GntR_C"/>
</dbReference>
<dbReference type="InterPro" id="IPR008920">
    <property type="entry name" value="TF_FadR/GntR_C"/>
</dbReference>
<dbReference type="InterPro" id="IPR000524">
    <property type="entry name" value="Tscrpt_reg_HTH_GntR"/>
</dbReference>
<dbReference type="InterPro" id="IPR036388">
    <property type="entry name" value="WH-like_DNA-bd_sf"/>
</dbReference>
<dbReference type="InterPro" id="IPR036390">
    <property type="entry name" value="WH_DNA-bd_sf"/>
</dbReference>
<dbReference type="PANTHER" id="PTHR43537:SF44">
    <property type="entry name" value="GNTR FAMILY REGULATORY PROTEIN"/>
    <property type="match status" value="1"/>
</dbReference>
<dbReference type="PANTHER" id="PTHR43537">
    <property type="entry name" value="TRANSCRIPTIONAL REGULATOR, GNTR FAMILY"/>
    <property type="match status" value="1"/>
</dbReference>
<dbReference type="Pfam" id="PF07729">
    <property type="entry name" value="FCD"/>
    <property type="match status" value="1"/>
</dbReference>
<dbReference type="Pfam" id="PF00392">
    <property type="entry name" value="GntR"/>
    <property type="match status" value="1"/>
</dbReference>
<dbReference type="PRINTS" id="PR00035">
    <property type="entry name" value="HTHGNTR"/>
</dbReference>
<dbReference type="SMART" id="SM00895">
    <property type="entry name" value="FCD"/>
    <property type="match status" value="1"/>
</dbReference>
<dbReference type="SMART" id="SM00345">
    <property type="entry name" value="HTH_GNTR"/>
    <property type="match status" value="1"/>
</dbReference>
<dbReference type="SUPFAM" id="SSF48008">
    <property type="entry name" value="GntR ligand-binding domain-like"/>
    <property type="match status" value="1"/>
</dbReference>
<dbReference type="SUPFAM" id="SSF46785">
    <property type="entry name" value="Winged helix' DNA-binding domain"/>
    <property type="match status" value="1"/>
</dbReference>
<dbReference type="PROSITE" id="PS50949">
    <property type="entry name" value="HTH_GNTR"/>
    <property type="match status" value="1"/>
</dbReference>
<protein>
    <recommendedName>
        <fullName>Uncharacterized HTH-type transcriptional regulator Rv0494</fullName>
    </recommendedName>
</protein>